<organism>
    <name type="scientific">Nitratidesulfovibrio vulgaris (strain ATCC 29579 / DSM 644 / CCUG 34227 / NCIMB 8303 / VKM B-1760 / Hildenborough)</name>
    <name type="common">Desulfovibrio vulgaris</name>
    <dbReference type="NCBI Taxonomy" id="882"/>
    <lineage>
        <taxon>Bacteria</taxon>
        <taxon>Pseudomonadati</taxon>
        <taxon>Thermodesulfobacteriota</taxon>
        <taxon>Desulfovibrionia</taxon>
        <taxon>Desulfovibrionales</taxon>
        <taxon>Desulfovibrionaceae</taxon>
        <taxon>Nitratidesulfovibrio</taxon>
    </lineage>
</organism>
<keyword id="KW-0963">Cytoplasm</keyword>
<keyword id="KW-1185">Reference proteome</keyword>
<keyword id="KW-0694">RNA-binding</keyword>
<gene>
    <name evidence="1" type="primary">smpB</name>
    <name type="ordered locus">DVU_0828</name>
</gene>
<reference key="1">
    <citation type="journal article" date="2004" name="Nat. Biotechnol.">
        <title>The genome sequence of the anaerobic, sulfate-reducing bacterium Desulfovibrio vulgaris Hildenborough.</title>
        <authorList>
            <person name="Heidelberg J.F."/>
            <person name="Seshadri R."/>
            <person name="Haveman S.A."/>
            <person name="Hemme C.L."/>
            <person name="Paulsen I.T."/>
            <person name="Kolonay J.F."/>
            <person name="Eisen J.A."/>
            <person name="Ward N.L."/>
            <person name="Methe B.A."/>
            <person name="Brinkac L.M."/>
            <person name="Daugherty S.C."/>
            <person name="DeBoy R.T."/>
            <person name="Dodson R.J."/>
            <person name="Durkin A.S."/>
            <person name="Madupu R."/>
            <person name="Nelson W.C."/>
            <person name="Sullivan S.A."/>
            <person name="Fouts D.E."/>
            <person name="Haft D.H."/>
            <person name="Selengut J."/>
            <person name="Peterson J.D."/>
            <person name="Davidsen T.M."/>
            <person name="Zafar N."/>
            <person name="Zhou L."/>
            <person name="Radune D."/>
            <person name="Dimitrov G."/>
            <person name="Hance M."/>
            <person name="Tran K."/>
            <person name="Khouri H.M."/>
            <person name="Gill J."/>
            <person name="Utterback T.R."/>
            <person name="Feldblyum T.V."/>
            <person name="Wall J.D."/>
            <person name="Voordouw G."/>
            <person name="Fraser C.M."/>
        </authorList>
    </citation>
    <scope>NUCLEOTIDE SEQUENCE [LARGE SCALE GENOMIC DNA]</scope>
    <source>
        <strain>ATCC 29579 / DSM 644 / CCUG 34227 / NCIMB 8303 / VKM B-1760 / Hildenborough</strain>
    </source>
</reference>
<proteinExistence type="inferred from homology"/>
<evidence type="ECO:0000255" key="1">
    <source>
        <dbReference type="HAMAP-Rule" id="MF_00023"/>
    </source>
</evidence>
<evidence type="ECO:0000256" key="2">
    <source>
        <dbReference type="SAM" id="MobiDB-lite"/>
    </source>
</evidence>
<name>SSRP_NITV2</name>
<sequence>MSKKAPGANVIAQNKKARHIYELSDNHEAGISLTGSEVKSLRAGHVNFRDSYVDFRNGEAFLVGLHIAPYDNAGYAQHDPDRDRKLLLHAHEIENLARSVEQKGYTVVPTKLYFARGKVKVDIAVGRGKKLHDQREDLKRRAEDRDTQRELARF</sequence>
<feature type="chain" id="PRO_0000102943" description="SsrA-binding protein">
    <location>
        <begin position="1"/>
        <end position="154"/>
    </location>
</feature>
<feature type="region of interest" description="Disordered" evidence="2">
    <location>
        <begin position="134"/>
        <end position="154"/>
    </location>
</feature>
<comment type="function">
    <text evidence="1">Required for rescue of stalled ribosomes mediated by trans-translation. Binds to transfer-messenger RNA (tmRNA), required for stable association of tmRNA with ribosomes. tmRNA and SmpB together mimic tRNA shape, replacing the anticodon stem-loop with SmpB. tmRNA is encoded by the ssrA gene; the 2 termini fold to resemble tRNA(Ala) and it encodes a 'tag peptide', a short internal open reading frame. During trans-translation Ala-aminoacylated tmRNA acts like a tRNA, entering the A-site of stalled ribosomes, displacing the stalled mRNA. The ribosome then switches to translate the ORF on the tmRNA; the nascent peptide is terminated with the 'tag peptide' encoded by the tmRNA and targeted for degradation. The ribosome is freed to recommence translation, which seems to be the essential function of trans-translation.</text>
</comment>
<comment type="subcellular location">
    <subcellularLocation>
        <location evidence="1">Cytoplasm</location>
    </subcellularLocation>
    <text evidence="1">The tmRNA-SmpB complex associates with stalled 70S ribosomes.</text>
</comment>
<comment type="similarity">
    <text evidence="1">Belongs to the SmpB family.</text>
</comment>
<dbReference type="EMBL" id="AE017285">
    <property type="protein sequence ID" value="AAS95308.1"/>
    <property type="molecule type" value="Genomic_DNA"/>
</dbReference>
<dbReference type="RefSeq" id="WP_010938129.1">
    <property type="nucleotide sequence ID" value="NC_002937.3"/>
</dbReference>
<dbReference type="RefSeq" id="YP_010049.1">
    <property type="nucleotide sequence ID" value="NC_002937.3"/>
</dbReference>
<dbReference type="SMR" id="Q72DV1"/>
<dbReference type="STRING" id="882.DVU_0828"/>
<dbReference type="PaxDb" id="882-DVU_0828"/>
<dbReference type="EnsemblBacteria" id="AAS95308">
    <property type="protein sequence ID" value="AAS95308"/>
    <property type="gene ID" value="DVU_0828"/>
</dbReference>
<dbReference type="KEGG" id="dvu:DVU_0828"/>
<dbReference type="PATRIC" id="fig|882.5.peg.774"/>
<dbReference type="eggNOG" id="COG0691">
    <property type="taxonomic scope" value="Bacteria"/>
</dbReference>
<dbReference type="HOGENOM" id="CLU_108953_0_0_7"/>
<dbReference type="OrthoDB" id="9805462at2"/>
<dbReference type="PhylomeDB" id="Q72DV1"/>
<dbReference type="Proteomes" id="UP000002194">
    <property type="component" value="Chromosome"/>
</dbReference>
<dbReference type="GO" id="GO:0005829">
    <property type="term" value="C:cytosol"/>
    <property type="evidence" value="ECO:0007669"/>
    <property type="project" value="TreeGrafter"/>
</dbReference>
<dbReference type="GO" id="GO:0003723">
    <property type="term" value="F:RNA binding"/>
    <property type="evidence" value="ECO:0007669"/>
    <property type="project" value="UniProtKB-UniRule"/>
</dbReference>
<dbReference type="GO" id="GO:0070929">
    <property type="term" value="P:trans-translation"/>
    <property type="evidence" value="ECO:0007669"/>
    <property type="project" value="UniProtKB-UniRule"/>
</dbReference>
<dbReference type="CDD" id="cd09294">
    <property type="entry name" value="SmpB"/>
    <property type="match status" value="1"/>
</dbReference>
<dbReference type="Gene3D" id="2.40.280.10">
    <property type="match status" value="1"/>
</dbReference>
<dbReference type="HAMAP" id="MF_00023">
    <property type="entry name" value="SmpB"/>
    <property type="match status" value="1"/>
</dbReference>
<dbReference type="InterPro" id="IPR023620">
    <property type="entry name" value="SmpB"/>
</dbReference>
<dbReference type="InterPro" id="IPR000037">
    <property type="entry name" value="SsrA-bd_prot"/>
</dbReference>
<dbReference type="InterPro" id="IPR020081">
    <property type="entry name" value="SsrA-bd_prot_CS"/>
</dbReference>
<dbReference type="NCBIfam" id="NF003843">
    <property type="entry name" value="PRK05422.1"/>
    <property type="match status" value="1"/>
</dbReference>
<dbReference type="NCBIfam" id="TIGR00086">
    <property type="entry name" value="smpB"/>
    <property type="match status" value="1"/>
</dbReference>
<dbReference type="PANTHER" id="PTHR30308:SF2">
    <property type="entry name" value="SSRA-BINDING PROTEIN"/>
    <property type="match status" value="1"/>
</dbReference>
<dbReference type="PANTHER" id="PTHR30308">
    <property type="entry name" value="TMRNA-BINDING COMPONENT OF TRANS-TRANSLATION TAGGING COMPLEX"/>
    <property type="match status" value="1"/>
</dbReference>
<dbReference type="Pfam" id="PF01668">
    <property type="entry name" value="SmpB"/>
    <property type="match status" value="1"/>
</dbReference>
<dbReference type="SUPFAM" id="SSF74982">
    <property type="entry name" value="Small protein B (SmpB)"/>
    <property type="match status" value="1"/>
</dbReference>
<dbReference type="PROSITE" id="PS01317">
    <property type="entry name" value="SSRP"/>
    <property type="match status" value="1"/>
</dbReference>
<accession>Q72DV1</accession>
<protein>
    <recommendedName>
        <fullName evidence="1">SsrA-binding protein</fullName>
    </recommendedName>
    <alternativeName>
        <fullName evidence="1">Small protein B</fullName>
    </alternativeName>
</protein>